<comment type="function">
    <text evidence="1">CRISPR (clustered regularly interspaced short palindromic repeat) is an adaptive immune system that provides protection against mobile genetic elements (viruses, transposable elements and conjugative plasmids). CRISPR clusters contain sequences complementary to antecedent mobile elements and target invading nucleic acids. CRISPR clusters are transcribed and processed into CRISPR RNA (crRNA). This protein may be a 5' to 3' ssDNA exonuclease.</text>
</comment>
<comment type="catalytic activity">
    <reaction evidence="1">
        <text>exonucleolytic cleavage in the 5'- to 3'-direction to yield nucleoside 3'-phosphates.</text>
        <dbReference type="EC" id="3.1.12.1"/>
    </reaction>
</comment>
<comment type="cofactor">
    <cofactor evidence="1">
        <name>Mg(2+)</name>
        <dbReference type="ChEBI" id="CHEBI:18420"/>
    </cofactor>
    <cofactor evidence="1">
        <name>Mn(2+)</name>
        <dbReference type="ChEBI" id="CHEBI:29035"/>
    </cofactor>
    <cofactor evidence="1">
        <name>Cu(2+)</name>
        <dbReference type="ChEBI" id="CHEBI:29036"/>
    </cofactor>
    <text evidence="1">Mg(2+) or Mn(2+) required for ssDNA cleavage activity. Can also utilise Cu(2+).</text>
</comment>
<comment type="cofactor">
    <cofactor evidence="1">
        <name>[4Fe-4S] cluster</name>
        <dbReference type="ChEBI" id="CHEBI:49883"/>
    </cofactor>
    <text evidence="1">Binds 1 [4Fe-4S] cluster per subunit. It may be important for protein stability, since mutation of the Cys that bind the cofactor leads to a colorless, insoluble protein.</text>
</comment>
<comment type="similarity">
    <text evidence="2">Belongs to the CRISPR-associated exonuclease Cas4 family.</text>
</comment>
<sequence length="170" mass="20420">MENYLEEELIIGGIEINYLYVCKTKLWYFVRGITMEQESDFVDLGKFLHEKSYFGEEKEVQIGSIKIDFIKKRDVIEIHEVKRGKQMEKAHIMQVLYYIYYLNSLGIKSKAILHYPKLKEIKEIELKENNKEEIKRAIKEIEYIKSLKEPPEPIYQKICKNCAYYELCFI</sequence>
<evidence type="ECO:0000250" key="1">
    <source>
        <dbReference type="UniProtKB" id="Q97TX9"/>
    </source>
</evidence>
<evidence type="ECO:0000305" key="2"/>
<feature type="chain" id="PRO_0000106840" description="CRISPR-associated exonuclease Cas4">
    <location>
        <begin position="1"/>
        <end position="170"/>
    </location>
</feature>
<feature type="binding site" evidence="1">
    <location>
        <position position="22"/>
    </location>
    <ligand>
        <name>[4Fe-4S] cluster</name>
        <dbReference type="ChEBI" id="CHEBI:49883"/>
    </ligand>
</feature>
<feature type="binding site" evidence="1">
    <location>
        <position position="49"/>
    </location>
    <ligand>
        <name>Mn(2+)</name>
        <dbReference type="ChEBI" id="CHEBI:29035"/>
    </ligand>
</feature>
<feature type="binding site" evidence="1">
    <location>
        <position position="68"/>
    </location>
    <ligand>
        <name>Mn(2+)</name>
        <dbReference type="ChEBI" id="CHEBI:29035"/>
    </ligand>
</feature>
<feature type="binding site" evidence="1">
    <location>
        <position position="80"/>
    </location>
    <ligand>
        <name>Mn(2+)</name>
        <dbReference type="ChEBI" id="CHEBI:29035"/>
    </ligand>
</feature>
<feature type="binding site" evidence="1">
    <location>
        <position position="159"/>
    </location>
    <ligand>
        <name>[4Fe-4S] cluster</name>
        <dbReference type="ChEBI" id="CHEBI:49883"/>
    </ligand>
</feature>
<feature type="binding site" evidence="1">
    <location>
        <position position="162"/>
    </location>
    <ligand>
        <name>[4Fe-4S] cluster</name>
        <dbReference type="ChEBI" id="CHEBI:49883"/>
    </ligand>
</feature>
<feature type="binding site" evidence="1">
    <location>
        <position position="168"/>
    </location>
    <ligand>
        <name>[4Fe-4S] cluster</name>
        <dbReference type="ChEBI" id="CHEBI:49883"/>
    </ligand>
</feature>
<gene>
    <name type="primary">cas4</name>
    <name type="ordered locus">MJ0377</name>
</gene>
<name>CAS4_METJA</name>
<organism>
    <name type="scientific">Methanocaldococcus jannaschii (strain ATCC 43067 / DSM 2661 / JAL-1 / JCM 10045 / NBRC 100440)</name>
    <name type="common">Methanococcus jannaschii</name>
    <dbReference type="NCBI Taxonomy" id="243232"/>
    <lineage>
        <taxon>Archaea</taxon>
        <taxon>Methanobacteriati</taxon>
        <taxon>Methanobacteriota</taxon>
        <taxon>Methanomada group</taxon>
        <taxon>Methanococci</taxon>
        <taxon>Methanococcales</taxon>
        <taxon>Methanocaldococcaceae</taxon>
        <taxon>Methanocaldococcus</taxon>
    </lineage>
</organism>
<protein>
    <recommendedName>
        <fullName>CRISPR-associated exonuclease Cas4</fullName>
        <ecNumber evidence="1">3.1.12.1</ecNumber>
    </recommendedName>
</protein>
<accession>Q57822</accession>
<reference key="1">
    <citation type="journal article" date="1996" name="Science">
        <title>Complete genome sequence of the methanogenic archaeon, Methanococcus jannaschii.</title>
        <authorList>
            <person name="Bult C.J."/>
            <person name="White O."/>
            <person name="Olsen G.J."/>
            <person name="Zhou L."/>
            <person name="Fleischmann R.D."/>
            <person name="Sutton G.G."/>
            <person name="Blake J.A."/>
            <person name="FitzGerald L.M."/>
            <person name="Clayton R.A."/>
            <person name="Gocayne J.D."/>
            <person name="Kerlavage A.R."/>
            <person name="Dougherty B.A."/>
            <person name="Tomb J.-F."/>
            <person name="Adams M.D."/>
            <person name="Reich C.I."/>
            <person name="Overbeek R."/>
            <person name="Kirkness E.F."/>
            <person name="Weinstock K.G."/>
            <person name="Merrick J.M."/>
            <person name="Glodek A."/>
            <person name="Scott J.L."/>
            <person name="Geoghagen N.S.M."/>
            <person name="Weidman J.F."/>
            <person name="Fuhrmann J.L."/>
            <person name="Nguyen D."/>
            <person name="Utterback T.R."/>
            <person name="Kelley J.M."/>
            <person name="Peterson J.D."/>
            <person name="Sadow P.W."/>
            <person name="Hanna M.C."/>
            <person name="Cotton M.D."/>
            <person name="Roberts K.M."/>
            <person name="Hurst M.A."/>
            <person name="Kaine B.P."/>
            <person name="Borodovsky M."/>
            <person name="Klenk H.-P."/>
            <person name="Fraser C.M."/>
            <person name="Smith H.O."/>
            <person name="Woese C.R."/>
            <person name="Venter J.C."/>
        </authorList>
    </citation>
    <scope>NUCLEOTIDE SEQUENCE [LARGE SCALE GENOMIC DNA]</scope>
    <source>
        <strain>ATCC 43067 / DSM 2661 / JAL-1 / JCM 10045 / NBRC 100440</strain>
    </source>
</reference>
<keyword id="KW-0004">4Fe-4S</keyword>
<keyword id="KW-0051">Antiviral defense</keyword>
<keyword id="KW-0269">Exonuclease</keyword>
<keyword id="KW-0378">Hydrolase</keyword>
<keyword id="KW-0408">Iron</keyword>
<keyword id="KW-0411">Iron-sulfur</keyword>
<keyword id="KW-0464">Manganese</keyword>
<keyword id="KW-0479">Metal-binding</keyword>
<keyword id="KW-0540">Nuclease</keyword>
<keyword id="KW-1185">Reference proteome</keyword>
<dbReference type="EC" id="3.1.12.1" evidence="1"/>
<dbReference type="EMBL" id="L77117">
    <property type="protein sequence ID" value="AAB98366.1"/>
    <property type="molecule type" value="Genomic_DNA"/>
</dbReference>
<dbReference type="PIR" id="A64347">
    <property type="entry name" value="A64347"/>
</dbReference>
<dbReference type="RefSeq" id="WP_010869876.1">
    <property type="nucleotide sequence ID" value="NC_000909.1"/>
</dbReference>
<dbReference type="SMR" id="Q57822"/>
<dbReference type="STRING" id="243232.MJ_0377"/>
<dbReference type="PaxDb" id="243232-MJ_0377"/>
<dbReference type="EnsemblBacteria" id="AAB98366">
    <property type="protein sequence ID" value="AAB98366"/>
    <property type="gene ID" value="MJ_0377"/>
</dbReference>
<dbReference type="GeneID" id="1451234"/>
<dbReference type="KEGG" id="mja:MJ_0377"/>
<dbReference type="eggNOG" id="arCOG00794">
    <property type="taxonomic scope" value="Archaea"/>
</dbReference>
<dbReference type="HOGENOM" id="CLU_133784_0_0_2"/>
<dbReference type="InParanoid" id="Q57822"/>
<dbReference type="OrthoDB" id="42881at2157"/>
<dbReference type="PhylomeDB" id="Q57822"/>
<dbReference type="Proteomes" id="UP000000805">
    <property type="component" value="Chromosome"/>
</dbReference>
<dbReference type="GO" id="GO:0051539">
    <property type="term" value="F:4 iron, 4 sulfur cluster binding"/>
    <property type="evidence" value="ECO:0000250"/>
    <property type="project" value="UniProtKB"/>
</dbReference>
<dbReference type="GO" id="GO:0030145">
    <property type="term" value="F:manganese ion binding"/>
    <property type="evidence" value="ECO:0000250"/>
    <property type="project" value="UniProtKB"/>
</dbReference>
<dbReference type="GO" id="GO:0045145">
    <property type="term" value="F:single-stranded DNA 5'-3' DNA exonuclease activity"/>
    <property type="evidence" value="ECO:0000250"/>
    <property type="project" value="UniProtKB"/>
</dbReference>
<dbReference type="GO" id="GO:0051607">
    <property type="term" value="P:defense response to virus"/>
    <property type="evidence" value="ECO:0007669"/>
    <property type="project" value="UniProtKB-KW"/>
</dbReference>
<dbReference type="GO" id="GO:0006308">
    <property type="term" value="P:DNA catabolic process"/>
    <property type="evidence" value="ECO:0000250"/>
    <property type="project" value="UniProtKB"/>
</dbReference>
<dbReference type="FunFam" id="3.90.320.10:FF:000036">
    <property type="entry name" value="CRISPR-associated exonuclease Cas4"/>
    <property type="match status" value="1"/>
</dbReference>
<dbReference type="Gene3D" id="3.90.320.10">
    <property type="match status" value="1"/>
</dbReference>
<dbReference type="InterPro" id="IPR013343">
    <property type="entry name" value="CRISPR-assoc_prot_Cas4"/>
</dbReference>
<dbReference type="InterPro" id="IPR022765">
    <property type="entry name" value="Dna2/Cas4_DUF83"/>
</dbReference>
<dbReference type="InterPro" id="IPR011604">
    <property type="entry name" value="PDDEXK-like_dom_sf"/>
</dbReference>
<dbReference type="NCBIfam" id="TIGR00372">
    <property type="entry name" value="cas4"/>
    <property type="match status" value="1"/>
</dbReference>
<dbReference type="PANTHER" id="PTHR37168">
    <property type="entry name" value="CRISPR-ASSOCIATED EXONUCLEASE CAS4"/>
    <property type="match status" value="1"/>
</dbReference>
<dbReference type="PANTHER" id="PTHR37168:SF1">
    <property type="entry name" value="CRISPR-ASSOCIATED EXONUCLEASE CAS4"/>
    <property type="match status" value="1"/>
</dbReference>
<dbReference type="Pfam" id="PF01930">
    <property type="entry name" value="Cas_Cas4"/>
    <property type="match status" value="1"/>
</dbReference>
<proteinExistence type="inferred from homology"/>